<evidence type="ECO:0000255" key="1">
    <source>
        <dbReference type="HAMAP-Rule" id="MF_00377"/>
    </source>
</evidence>
<evidence type="ECO:0000256" key="2">
    <source>
        <dbReference type="SAM" id="MobiDB-lite"/>
    </source>
</evidence>
<keyword id="KW-0067">ATP-binding</keyword>
<keyword id="KW-0963">Cytoplasm</keyword>
<keyword id="KW-0235">DNA replication</keyword>
<keyword id="KW-0238">DNA-binding</keyword>
<keyword id="KW-0446">Lipid-binding</keyword>
<keyword id="KW-0547">Nucleotide-binding</keyword>
<protein>
    <recommendedName>
        <fullName evidence="1">Chromosomal replication initiator protein DnaA</fullName>
    </recommendedName>
</protein>
<reference key="1">
    <citation type="journal article" date="2005" name="BMC Genomics">
        <title>Bacterial genome adaptation to niches: divergence of the potential virulence genes in three Burkholderia species of different survival strategies.</title>
        <authorList>
            <person name="Kim H.S."/>
            <person name="Schell M.A."/>
            <person name="Yu Y."/>
            <person name="Ulrich R.L."/>
            <person name="Sarria S.H."/>
            <person name="Nierman W.C."/>
            <person name="DeShazer D."/>
        </authorList>
    </citation>
    <scope>NUCLEOTIDE SEQUENCE [LARGE SCALE GENOMIC DNA]</scope>
    <source>
        <strain>ATCC 700388 / DSM 13276 / CCUG 48851 / CIP 106301 / E264</strain>
    </source>
</reference>
<sequence>MNDFWQHCSALLERELTPQQYVTWIKPLAPVAFDAAANTLSIAAPNRFKLDWVKSQFSGRISDLARDFWNAPIEVQFVLDPKVGQRSAAGAAPLAPRAPLPAANPAPVTAGPAPSGAADANAPAPAGMNAATAAAVAAVAAAQAAQAAQANAAALNADEAADLDLPSLTAHEAAAGRRTWRPGAASANSEAADSMYERSKLNPVLTFDNFVTGKANQLARAAAIQVADNPGISYNPLFLYGGVGLGKTHLIHAIGNQLLLDKPGARIRYIHAEQYVSDVVKAYQRKAFDDFKRYYHSLDLLLIDDIQFFSGKSRTQEEFFYAFEALVANKAQVIITSDTYPKEISGIDDRLISRFDSGLTVAIEPPELEMRVAILMRKAQSEGVSLSEDVAFFVAKHLRSNVRELEGALRKILAYSKFHGREITIELTKEALKDLLTVQNRQISVENIQKTVADFYNIKVADMYSKKRPANIARPRQIAMYLAKELTQKSLPEIGELFGGRDHTTVLHAVRKIADERGKDAQLNHELHVLEQTLKG</sequence>
<accession>Q2STL6</accession>
<feature type="chain" id="PRO_1000048622" description="Chromosomal replication initiator protein DnaA">
    <location>
        <begin position="1"/>
        <end position="536"/>
    </location>
</feature>
<feature type="region of interest" description="Domain I, interacts with DnaA modulators" evidence="1">
    <location>
        <begin position="1"/>
        <end position="72"/>
    </location>
</feature>
<feature type="region of interest" description="Domain II" evidence="1">
    <location>
        <begin position="72"/>
        <end position="199"/>
    </location>
</feature>
<feature type="region of interest" description="Disordered" evidence="2">
    <location>
        <begin position="97"/>
        <end position="121"/>
    </location>
</feature>
<feature type="region of interest" description="Domain III, AAA+ region" evidence="1">
    <location>
        <begin position="200"/>
        <end position="416"/>
    </location>
</feature>
<feature type="region of interest" description="Domain IV, binds dsDNA" evidence="1">
    <location>
        <begin position="417"/>
        <end position="536"/>
    </location>
</feature>
<feature type="compositionally biased region" description="Low complexity" evidence="2">
    <location>
        <begin position="105"/>
        <end position="121"/>
    </location>
</feature>
<feature type="binding site" evidence="1">
    <location>
        <position position="244"/>
    </location>
    <ligand>
        <name>ATP</name>
        <dbReference type="ChEBI" id="CHEBI:30616"/>
    </ligand>
</feature>
<feature type="binding site" evidence="1">
    <location>
        <position position="246"/>
    </location>
    <ligand>
        <name>ATP</name>
        <dbReference type="ChEBI" id="CHEBI:30616"/>
    </ligand>
</feature>
<feature type="binding site" evidence="1">
    <location>
        <position position="247"/>
    </location>
    <ligand>
        <name>ATP</name>
        <dbReference type="ChEBI" id="CHEBI:30616"/>
    </ligand>
</feature>
<feature type="binding site" evidence="1">
    <location>
        <position position="248"/>
    </location>
    <ligand>
        <name>ATP</name>
        <dbReference type="ChEBI" id="CHEBI:30616"/>
    </ligand>
</feature>
<dbReference type="EMBL" id="CP000086">
    <property type="protein sequence ID" value="ABC37837.1"/>
    <property type="molecule type" value="Genomic_DNA"/>
</dbReference>
<dbReference type="RefSeq" id="WP_011402629.1">
    <property type="nucleotide sequence ID" value="NZ_CP008785.1"/>
</dbReference>
<dbReference type="SMR" id="Q2STL6"/>
<dbReference type="GeneID" id="45122917"/>
<dbReference type="KEGG" id="bte:BTH_I3239"/>
<dbReference type="HOGENOM" id="CLU_026910_0_1_4"/>
<dbReference type="Proteomes" id="UP000001930">
    <property type="component" value="Chromosome I"/>
</dbReference>
<dbReference type="GO" id="GO:0005737">
    <property type="term" value="C:cytoplasm"/>
    <property type="evidence" value="ECO:0007669"/>
    <property type="project" value="UniProtKB-SubCell"/>
</dbReference>
<dbReference type="GO" id="GO:0005886">
    <property type="term" value="C:plasma membrane"/>
    <property type="evidence" value="ECO:0007669"/>
    <property type="project" value="TreeGrafter"/>
</dbReference>
<dbReference type="GO" id="GO:0005524">
    <property type="term" value="F:ATP binding"/>
    <property type="evidence" value="ECO:0007669"/>
    <property type="project" value="UniProtKB-UniRule"/>
</dbReference>
<dbReference type="GO" id="GO:0016887">
    <property type="term" value="F:ATP hydrolysis activity"/>
    <property type="evidence" value="ECO:0007669"/>
    <property type="project" value="InterPro"/>
</dbReference>
<dbReference type="GO" id="GO:0003688">
    <property type="term" value="F:DNA replication origin binding"/>
    <property type="evidence" value="ECO:0007669"/>
    <property type="project" value="UniProtKB-UniRule"/>
</dbReference>
<dbReference type="GO" id="GO:0008289">
    <property type="term" value="F:lipid binding"/>
    <property type="evidence" value="ECO:0007669"/>
    <property type="project" value="UniProtKB-KW"/>
</dbReference>
<dbReference type="GO" id="GO:0006270">
    <property type="term" value="P:DNA replication initiation"/>
    <property type="evidence" value="ECO:0007669"/>
    <property type="project" value="UniProtKB-UniRule"/>
</dbReference>
<dbReference type="GO" id="GO:0006275">
    <property type="term" value="P:regulation of DNA replication"/>
    <property type="evidence" value="ECO:0007669"/>
    <property type="project" value="UniProtKB-UniRule"/>
</dbReference>
<dbReference type="CDD" id="cd00009">
    <property type="entry name" value="AAA"/>
    <property type="match status" value="1"/>
</dbReference>
<dbReference type="CDD" id="cd06571">
    <property type="entry name" value="Bac_DnaA_C"/>
    <property type="match status" value="1"/>
</dbReference>
<dbReference type="FunFam" id="1.10.8.60:FF:000003">
    <property type="entry name" value="Chromosomal replication initiator protein DnaA"/>
    <property type="match status" value="1"/>
</dbReference>
<dbReference type="FunFam" id="3.40.50.300:FF:000668">
    <property type="entry name" value="Chromosomal replication initiator protein DnaA"/>
    <property type="match status" value="1"/>
</dbReference>
<dbReference type="Gene3D" id="1.10.1750.10">
    <property type="match status" value="1"/>
</dbReference>
<dbReference type="Gene3D" id="1.10.8.60">
    <property type="match status" value="1"/>
</dbReference>
<dbReference type="Gene3D" id="3.30.300.180">
    <property type="match status" value="1"/>
</dbReference>
<dbReference type="Gene3D" id="3.40.50.300">
    <property type="entry name" value="P-loop containing nucleotide triphosphate hydrolases"/>
    <property type="match status" value="1"/>
</dbReference>
<dbReference type="HAMAP" id="MF_00377">
    <property type="entry name" value="DnaA_bact"/>
    <property type="match status" value="1"/>
</dbReference>
<dbReference type="InterPro" id="IPR003593">
    <property type="entry name" value="AAA+_ATPase"/>
</dbReference>
<dbReference type="InterPro" id="IPR001957">
    <property type="entry name" value="Chromosome_initiator_DnaA"/>
</dbReference>
<dbReference type="InterPro" id="IPR020591">
    <property type="entry name" value="Chromosome_initiator_DnaA-like"/>
</dbReference>
<dbReference type="InterPro" id="IPR018312">
    <property type="entry name" value="Chromosome_initiator_DnaA_CS"/>
</dbReference>
<dbReference type="InterPro" id="IPR013159">
    <property type="entry name" value="DnaA_C"/>
</dbReference>
<dbReference type="InterPro" id="IPR013317">
    <property type="entry name" value="DnaA_dom"/>
</dbReference>
<dbReference type="InterPro" id="IPR024633">
    <property type="entry name" value="DnaA_N_dom"/>
</dbReference>
<dbReference type="InterPro" id="IPR038454">
    <property type="entry name" value="DnaA_N_sf"/>
</dbReference>
<dbReference type="InterPro" id="IPR055199">
    <property type="entry name" value="Hda_lid"/>
</dbReference>
<dbReference type="InterPro" id="IPR027417">
    <property type="entry name" value="P-loop_NTPase"/>
</dbReference>
<dbReference type="InterPro" id="IPR010921">
    <property type="entry name" value="Trp_repressor/repl_initiator"/>
</dbReference>
<dbReference type="NCBIfam" id="TIGR00362">
    <property type="entry name" value="DnaA"/>
    <property type="match status" value="1"/>
</dbReference>
<dbReference type="PANTHER" id="PTHR30050">
    <property type="entry name" value="CHROMOSOMAL REPLICATION INITIATOR PROTEIN DNAA"/>
    <property type="match status" value="1"/>
</dbReference>
<dbReference type="PANTHER" id="PTHR30050:SF2">
    <property type="entry name" value="CHROMOSOMAL REPLICATION INITIATOR PROTEIN DNAA"/>
    <property type="match status" value="1"/>
</dbReference>
<dbReference type="Pfam" id="PF00308">
    <property type="entry name" value="Bac_DnaA"/>
    <property type="match status" value="1"/>
</dbReference>
<dbReference type="Pfam" id="PF08299">
    <property type="entry name" value="Bac_DnaA_C"/>
    <property type="match status" value="1"/>
</dbReference>
<dbReference type="Pfam" id="PF11638">
    <property type="entry name" value="DnaA_N"/>
    <property type="match status" value="1"/>
</dbReference>
<dbReference type="Pfam" id="PF22688">
    <property type="entry name" value="Hda_lid"/>
    <property type="match status" value="1"/>
</dbReference>
<dbReference type="PRINTS" id="PR00051">
    <property type="entry name" value="DNAA"/>
</dbReference>
<dbReference type="SMART" id="SM00382">
    <property type="entry name" value="AAA"/>
    <property type="match status" value="1"/>
</dbReference>
<dbReference type="SMART" id="SM00760">
    <property type="entry name" value="Bac_DnaA_C"/>
    <property type="match status" value="1"/>
</dbReference>
<dbReference type="SUPFAM" id="SSF52540">
    <property type="entry name" value="P-loop containing nucleoside triphosphate hydrolases"/>
    <property type="match status" value="1"/>
</dbReference>
<dbReference type="SUPFAM" id="SSF48295">
    <property type="entry name" value="TrpR-like"/>
    <property type="match status" value="1"/>
</dbReference>
<dbReference type="PROSITE" id="PS01008">
    <property type="entry name" value="DNAA"/>
    <property type="match status" value="1"/>
</dbReference>
<name>DNAA_BURTA</name>
<gene>
    <name evidence="1" type="primary">dnaA</name>
    <name type="ordered locus">BTH_I3239</name>
</gene>
<proteinExistence type="inferred from homology"/>
<organism>
    <name type="scientific">Burkholderia thailandensis (strain ATCC 700388 / DSM 13276 / CCUG 48851 / CIP 106301 / E264)</name>
    <dbReference type="NCBI Taxonomy" id="271848"/>
    <lineage>
        <taxon>Bacteria</taxon>
        <taxon>Pseudomonadati</taxon>
        <taxon>Pseudomonadota</taxon>
        <taxon>Betaproteobacteria</taxon>
        <taxon>Burkholderiales</taxon>
        <taxon>Burkholderiaceae</taxon>
        <taxon>Burkholderia</taxon>
        <taxon>pseudomallei group</taxon>
    </lineage>
</organism>
<comment type="function">
    <text evidence="1">Plays an essential role in the initiation and regulation of chromosomal replication. ATP-DnaA binds to the origin of replication (oriC) to initiate formation of the DNA replication initiation complex once per cell cycle. Binds the DnaA box (a 9 base pair repeat at the origin) and separates the double-stranded (ds)DNA. Forms a right-handed helical filament on oriC DNA; dsDNA binds to the exterior of the filament while single-stranded (ss)DNA is stabiized in the filament's interior. The ATP-DnaA-oriC complex binds and stabilizes one strand of the AT-rich DNA unwinding element (DUE), permitting loading of DNA polymerase. After initiation quickly degrades to an ADP-DnaA complex that is not apt for DNA replication. Binds acidic phospholipids.</text>
</comment>
<comment type="subunit">
    <text evidence="1">Oligomerizes as a right-handed, spiral filament on DNA at oriC.</text>
</comment>
<comment type="subcellular location">
    <subcellularLocation>
        <location evidence="1">Cytoplasm</location>
    </subcellularLocation>
</comment>
<comment type="domain">
    <text evidence="1">Domain I is involved in oligomerization and binding regulators, domain II is flexibile and of varying length in different bacteria, domain III forms the AAA+ region, while domain IV binds dsDNA.</text>
</comment>
<comment type="similarity">
    <text evidence="1">Belongs to the DnaA family.</text>
</comment>